<protein>
    <recommendedName>
        <fullName evidence="6">Anthranilate 1,2-dioxygenase large subunit</fullName>
        <ecNumber evidence="5">1.14.12.1</ecNumber>
    </recommendedName>
</protein>
<keyword id="KW-0001">2Fe-2S</keyword>
<keyword id="KW-0058">Aromatic hydrocarbons catabolism</keyword>
<keyword id="KW-0223">Dioxygenase</keyword>
<keyword id="KW-0408">Iron</keyword>
<keyword id="KW-0411">Iron-sulfur</keyword>
<keyword id="KW-0479">Metal-binding</keyword>
<keyword id="KW-0520">NAD</keyword>
<keyword id="KW-0560">Oxidoreductase</keyword>
<sequence>MEQTASPVVFAARDDASDVHFPHDDGSRVPYKVFSSRAVYDREQERIFRGPTWNFVALEAEIPNAGDFKSTFVGDTPVVVTRTEDGALSAWVNRCAHRGAQVCRKSRGNASSHTCVYHQWSFDNEGNLLGVPFRRGQKGMTGMPADFDPKQHGLRKLRVDSYRGLVFATFSDDVAPLPDYLGAQMRPWIDRIFHKPIEYLGCTRQYSKSNWKLYMENVKDPYHASMLHLFHTTFNIFRVGMKARSIPDANHGLHSIITVTKTGDDTSAAYKQQNIRSFDEGFHLEDESILDLVSEYDEDCTNHIQPIFPQLVIQQIHNTLVARQILPKGPDNFELIFHFFGYADDTPELRALRIKQANLVGPAGYISMEDTEATELVQRGTVRDADATSVIEMSRGNPEQQDTVITESLIRKFWVGYQKLMGY</sequence>
<reference evidence="7 8" key="1">
    <citation type="journal article" date="2003" name="J. Bacteriol.">
        <title>Characterization and regulation of the genes for a novel anthranilate 1,2-dioxygenase from Burkholderia cepacia DBO1.</title>
        <authorList>
            <person name="Chang H.K."/>
            <person name="Mohseni P."/>
            <person name="Zylstra G.J."/>
        </authorList>
    </citation>
    <scope>NUCLEOTIDE SEQUENCE [GENOMIC DNA]</scope>
    <scope>FUNCTION</scope>
    <scope>CATALYTIC ACTIVITY</scope>
    <scope>PATHWAY</scope>
    <scope>SUBUNIT</scope>
    <scope>INDUCTION</scope>
    <source>
        <strain evidence="8">ATCC 29424 / DBO1</strain>
    </source>
</reference>
<comment type="function">
    <text evidence="5">Oxygenase component of anthranilate dioxygenase multicomponent enzyme system which catalyzes the incorporation of both atoms of molecular oxygen into anthranilate to form catechol. Can also act on benzoate and salicylate but not on 2-chlorobenzoate or o-toluate.</text>
</comment>
<comment type="catalytic activity">
    <reaction evidence="5">
        <text>anthranilate + NADH + O2 + 3 H(+) = catechol + NH4(+) + CO2 + NAD(+)</text>
        <dbReference type="Rhea" id="RHEA:11076"/>
        <dbReference type="ChEBI" id="CHEBI:15378"/>
        <dbReference type="ChEBI" id="CHEBI:15379"/>
        <dbReference type="ChEBI" id="CHEBI:16526"/>
        <dbReference type="ChEBI" id="CHEBI:16567"/>
        <dbReference type="ChEBI" id="CHEBI:18135"/>
        <dbReference type="ChEBI" id="CHEBI:28938"/>
        <dbReference type="ChEBI" id="CHEBI:57540"/>
        <dbReference type="ChEBI" id="CHEBI:57945"/>
        <dbReference type="EC" id="1.14.12.1"/>
    </reaction>
</comment>
<comment type="catalytic activity">
    <reaction evidence="5">
        <text>anthranilate + NADPH + O2 + 3 H(+) = catechol + NH4(+) + CO2 + NADP(+)</text>
        <dbReference type="Rhea" id="RHEA:11072"/>
        <dbReference type="ChEBI" id="CHEBI:15378"/>
        <dbReference type="ChEBI" id="CHEBI:15379"/>
        <dbReference type="ChEBI" id="CHEBI:16526"/>
        <dbReference type="ChEBI" id="CHEBI:16567"/>
        <dbReference type="ChEBI" id="CHEBI:18135"/>
        <dbReference type="ChEBI" id="CHEBI:28938"/>
        <dbReference type="ChEBI" id="CHEBI:57783"/>
        <dbReference type="ChEBI" id="CHEBI:58349"/>
        <dbReference type="EC" id="1.14.12.1"/>
    </reaction>
</comment>
<comment type="cofactor">
    <cofactor evidence="1">
        <name>Fe cation</name>
        <dbReference type="ChEBI" id="CHEBI:24875"/>
    </cofactor>
    <text evidence="1">Binds 1 Fe cation per subunit.</text>
</comment>
<comment type="cofactor">
    <cofactor evidence="1 4">
        <name>[2Fe-2S] cluster</name>
        <dbReference type="ChEBI" id="CHEBI:190135"/>
    </cofactor>
    <text evidence="1 4">Binds 1 [2Fe-2S] cluster per subunit.</text>
</comment>
<comment type="pathway">
    <text evidence="5">Aromatic compound metabolism; anthranilate degradation via hydroxylation; catechol from anthranilate: step 1/1.</text>
</comment>
<comment type="subunit">
    <text evidence="5">Part of a multicomponent enzyme system composed of a reductase (AndAa), a ferredoxin (AndAb) and a two-subunit oxygenase component (AndAc and AndAd).</text>
</comment>
<comment type="induction">
    <text evidence="5">By anthranilate but not by benzoate or salicylate. Expression is positively regulated by the transcriptional regulator AndR.</text>
</comment>
<comment type="similarity">
    <text evidence="3">Belongs to the bacterial ring-hydroxylating dioxygenase alpha subunit family.</text>
</comment>
<dbReference type="EC" id="1.14.12.1" evidence="5"/>
<dbReference type="EMBL" id="AY223539">
    <property type="protein sequence ID" value="AAO83639.1"/>
    <property type="molecule type" value="Genomic_DNA"/>
</dbReference>
<dbReference type="SMR" id="Q84BZ3"/>
<dbReference type="STRING" id="292.WI67_21075"/>
<dbReference type="KEGG" id="ag:AAO83639"/>
<dbReference type="eggNOG" id="COG4638">
    <property type="taxonomic scope" value="Bacteria"/>
</dbReference>
<dbReference type="BioCyc" id="MetaCyc:MONOMER-7528"/>
<dbReference type="BRENDA" id="1.14.12.1">
    <property type="organism ID" value="1028"/>
</dbReference>
<dbReference type="UniPathway" id="UPA01016">
    <property type="reaction ID" value="UER01026"/>
</dbReference>
<dbReference type="GO" id="GO:0051537">
    <property type="term" value="F:2 iron, 2 sulfur cluster binding"/>
    <property type="evidence" value="ECO:0007669"/>
    <property type="project" value="UniProtKB-KW"/>
</dbReference>
<dbReference type="GO" id="GO:0018618">
    <property type="term" value="F:anthranilate 1,2-dioxygenase (deaminating, decarboxylating) activity"/>
    <property type="evidence" value="ECO:0007669"/>
    <property type="project" value="UniProtKB-EC"/>
</dbReference>
<dbReference type="GO" id="GO:0005506">
    <property type="term" value="F:iron ion binding"/>
    <property type="evidence" value="ECO:0007669"/>
    <property type="project" value="InterPro"/>
</dbReference>
<dbReference type="GO" id="GO:0009056">
    <property type="term" value="P:catabolic process"/>
    <property type="evidence" value="ECO:0007669"/>
    <property type="project" value="UniProtKB-KW"/>
</dbReference>
<dbReference type="CDD" id="cd08880">
    <property type="entry name" value="RHO_alpha_C_ahdA1c-like"/>
    <property type="match status" value="1"/>
</dbReference>
<dbReference type="CDD" id="cd03545">
    <property type="entry name" value="Rieske_RO_Alpha_OHBDO_like"/>
    <property type="match status" value="1"/>
</dbReference>
<dbReference type="Gene3D" id="3.90.380.10">
    <property type="entry name" value="Naphthalene 1,2-dioxygenase Alpha Subunit, Chain A, domain 1"/>
    <property type="match status" value="1"/>
</dbReference>
<dbReference type="Gene3D" id="2.102.10.10">
    <property type="entry name" value="Rieske [2Fe-2S] iron-sulphur domain"/>
    <property type="match status" value="1"/>
</dbReference>
<dbReference type="InterPro" id="IPR043264">
    <property type="entry name" value="AhdA1c-like_alpha_C"/>
</dbReference>
<dbReference type="InterPro" id="IPR017638">
    <property type="entry name" value="Anthranilate_1-2-diOase_lsu"/>
</dbReference>
<dbReference type="InterPro" id="IPR017941">
    <property type="entry name" value="Rieske_2Fe-2S"/>
</dbReference>
<dbReference type="InterPro" id="IPR036922">
    <property type="entry name" value="Rieske_2Fe-2S_sf"/>
</dbReference>
<dbReference type="InterPro" id="IPR015881">
    <property type="entry name" value="Ring-hydroxy_dOase_2Fe2S_BS"/>
</dbReference>
<dbReference type="InterPro" id="IPR015879">
    <property type="entry name" value="Ring_hydroxy_dOase_asu_C_dom"/>
</dbReference>
<dbReference type="InterPro" id="IPR001663">
    <property type="entry name" value="Rng_hydr_dOase-A"/>
</dbReference>
<dbReference type="NCBIfam" id="NF041684">
    <property type="entry name" value="ant_diox_AndAc"/>
    <property type="match status" value="1"/>
</dbReference>
<dbReference type="PANTHER" id="PTHR43756:SF1">
    <property type="entry name" value="3-PHENYLPROPIONATE_CINNAMIC ACID DIOXYGENASE SUBUNIT ALPHA"/>
    <property type="match status" value="1"/>
</dbReference>
<dbReference type="PANTHER" id="PTHR43756">
    <property type="entry name" value="CHOLINE MONOOXYGENASE, CHLOROPLASTIC"/>
    <property type="match status" value="1"/>
</dbReference>
<dbReference type="Pfam" id="PF00355">
    <property type="entry name" value="Rieske"/>
    <property type="match status" value="1"/>
</dbReference>
<dbReference type="Pfam" id="PF00848">
    <property type="entry name" value="Ring_hydroxyl_A"/>
    <property type="match status" value="1"/>
</dbReference>
<dbReference type="PRINTS" id="PR00090">
    <property type="entry name" value="RNGDIOXGNASE"/>
</dbReference>
<dbReference type="SUPFAM" id="SSF55961">
    <property type="entry name" value="Bet v1-like"/>
    <property type="match status" value="1"/>
</dbReference>
<dbReference type="SUPFAM" id="SSF50022">
    <property type="entry name" value="ISP domain"/>
    <property type="match status" value="1"/>
</dbReference>
<dbReference type="PROSITE" id="PS51296">
    <property type="entry name" value="RIESKE"/>
    <property type="match status" value="1"/>
</dbReference>
<dbReference type="PROSITE" id="PS00570">
    <property type="entry name" value="RING_HYDROXYL_ALPHA"/>
    <property type="match status" value="1"/>
</dbReference>
<organism>
    <name type="scientific">Burkholderia cepacia</name>
    <name type="common">Pseudomonas cepacia</name>
    <dbReference type="NCBI Taxonomy" id="292"/>
    <lineage>
        <taxon>Bacteria</taxon>
        <taxon>Pseudomonadati</taxon>
        <taxon>Pseudomonadota</taxon>
        <taxon>Betaproteobacteria</taxon>
        <taxon>Burkholderiales</taxon>
        <taxon>Burkholderiaceae</taxon>
        <taxon>Burkholderia</taxon>
        <taxon>Burkholderia cepacia complex</taxon>
    </lineage>
</organism>
<evidence type="ECO:0000250" key="1">
    <source>
        <dbReference type="UniProtKB" id="O85673"/>
    </source>
</evidence>
<evidence type="ECO:0000250" key="2">
    <source>
        <dbReference type="UniProtKB" id="P0A110"/>
    </source>
</evidence>
<evidence type="ECO:0000255" key="3"/>
<evidence type="ECO:0000255" key="4">
    <source>
        <dbReference type="PROSITE-ProRule" id="PRU00628"/>
    </source>
</evidence>
<evidence type="ECO:0000269" key="5">
    <source>
    </source>
</evidence>
<evidence type="ECO:0000303" key="6">
    <source>
    </source>
</evidence>
<evidence type="ECO:0000305" key="7"/>
<evidence type="ECO:0000312" key="8">
    <source>
        <dbReference type="EMBL" id="AAO83639.1"/>
    </source>
</evidence>
<proteinExistence type="evidence at protein level"/>
<name>ANDAC_BURCE</name>
<gene>
    <name evidence="8" type="primary">andAc</name>
</gene>
<feature type="chain" id="PRO_0000415163" description="Anthranilate 1,2-dioxygenase large subunit">
    <location>
        <begin position="1"/>
        <end position="423"/>
    </location>
</feature>
<feature type="domain" description="Rieske" evidence="4">
    <location>
        <begin position="53"/>
        <end position="168"/>
    </location>
</feature>
<feature type="binding site" evidence="2 4">
    <location>
        <position position="95"/>
    </location>
    <ligand>
        <name>[2Fe-2S] cluster</name>
        <dbReference type="ChEBI" id="CHEBI:190135"/>
    </ligand>
</feature>
<feature type="binding site" evidence="2 4">
    <location>
        <position position="97"/>
    </location>
    <ligand>
        <name>[2Fe-2S] cluster</name>
        <dbReference type="ChEBI" id="CHEBI:190135"/>
    </ligand>
</feature>
<feature type="binding site" evidence="2 4">
    <location>
        <position position="115"/>
    </location>
    <ligand>
        <name>[2Fe-2S] cluster</name>
        <dbReference type="ChEBI" id="CHEBI:190135"/>
    </ligand>
</feature>
<feature type="binding site" evidence="2 4">
    <location>
        <position position="118"/>
    </location>
    <ligand>
        <name>[2Fe-2S] cluster</name>
        <dbReference type="ChEBI" id="CHEBI:190135"/>
    </ligand>
</feature>
<feature type="binding site" evidence="2">
    <location>
        <position position="223"/>
    </location>
    <ligand>
        <name>Fe cation</name>
        <dbReference type="ChEBI" id="CHEBI:24875"/>
    </ligand>
</feature>
<feature type="binding site" evidence="2">
    <location>
        <position position="228"/>
    </location>
    <ligand>
        <name>Fe cation</name>
        <dbReference type="ChEBI" id="CHEBI:24875"/>
    </ligand>
</feature>
<feature type="binding site" evidence="2">
    <location>
        <position position="370"/>
    </location>
    <ligand>
        <name>Fe cation</name>
        <dbReference type="ChEBI" id="CHEBI:24875"/>
    </ligand>
</feature>
<accession>Q84BZ3</accession>